<comment type="catalytic activity">
    <reaction evidence="1">
        <text>tRNA(Gln) + L-glutamine + ATP = L-glutaminyl-tRNA(Gln) + AMP + diphosphate</text>
        <dbReference type="Rhea" id="RHEA:20121"/>
        <dbReference type="Rhea" id="RHEA-COMP:9662"/>
        <dbReference type="Rhea" id="RHEA-COMP:9681"/>
        <dbReference type="ChEBI" id="CHEBI:30616"/>
        <dbReference type="ChEBI" id="CHEBI:33019"/>
        <dbReference type="ChEBI" id="CHEBI:58359"/>
        <dbReference type="ChEBI" id="CHEBI:78442"/>
        <dbReference type="ChEBI" id="CHEBI:78521"/>
        <dbReference type="ChEBI" id="CHEBI:456215"/>
        <dbReference type="EC" id="6.1.1.18"/>
    </reaction>
</comment>
<comment type="subunit">
    <text evidence="1">Monomer.</text>
</comment>
<comment type="subcellular location">
    <subcellularLocation>
        <location evidence="1">Cytoplasm</location>
    </subcellularLocation>
</comment>
<comment type="similarity">
    <text evidence="1">Belongs to the class-I aminoacyl-tRNA synthetase family.</text>
</comment>
<feature type="chain" id="PRO_0000242884" description="Glutamine--tRNA ligase">
    <location>
        <begin position="1"/>
        <end position="555"/>
    </location>
</feature>
<feature type="short sequence motif" description="'HIGH' region" evidence="1">
    <location>
        <begin position="34"/>
        <end position="44"/>
    </location>
</feature>
<feature type="short sequence motif" description="'KMSKS' region" evidence="1">
    <location>
        <begin position="268"/>
        <end position="272"/>
    </location>
</feature>
<feature type="binding site" evidence="1">
    <location>
        <begin position="35"/>
        <end position="37"/>
    </location>
    <ligand>
        <name>ATP</name>
        <dbReference type="ChEBI" id="CHEBI:30616"/>
    </ligand>
</feature>
<feature type="binding site" evidence="1">
    <location>
        <begin position="41"/>
        <end position="47"/>
    </location>
    <ligand>
        <name>ATP</name>
        <dbReference type="ChEBI" id="CHEBI:30616"/>
    </ligand>
</feature>
<feature type="binding site" evidence="1">
    <location>
        <position position="67"/>
    </location>
    <ligand>
        <name>L-glutamine</name>
        <dbReference type="ChEBI" id="CHEBI:58359"/>
    </ligand>
</feature>
<feature type="binding site" evidence="1">
    <location>
        <position position="212"/>
    </location>
    <ligand>
        <name>L-glutamine</name>
        <dbReference type="ChEBI" id="CHEBI:58359"/>
    </ligand>
</feature>
<feature type="binding site" evidence="1">
    <location>
        <position position="231"/>
    </location>
    <ligand>
        <name>ATP</name>
        <dbReference type="ChEBI" id="CHEBI:30616"/>
    </ligand>
</feature>
<feature type="binding site" evidence="1">
    <location>
        <begin position="261"/>
        <end position="262"/>
    </location>
    <ligand>
        <name>ATP</name>
        <dbReference type="ChEBI" id="CHEBI:30616"/>
    </ligand>
</feature>
<feature type="binding site" evidence="1">
    <location>
        <begin position="269"/>
        <end position="271"/>
    </location>
    <ligand>
        <name>ATP</name>
        <dbReference type="ChEBI" id="CHEBI:30616"/>
    </ligand>
</feature>
<accession>Q66DC5</accession>
<name>SYQ_YERPS</name>
<dbReference type="EC" id="6.1.1.18" evidence="1"/>
<dbReference type="EMBL" id="BX936398">
    <property type="protein sequence ID" value="CAH20361.1"/>
    <property type="molecule type" value="Genomic_DNA"/>
</dbReference>
<dbReference type="RefSeq" id="WP_002210354.1">
    <property type="nucleotide sequence ID" value="NZ_CP009712.1"/>
</dbReference>
<dbReference type="SMR" id="Q66DC5"/>
<dbReference type="GeneID" id="57976061"/>
<dbReference type="KEGG" id="ypo:BZ17_1416"/>
<dbReference type="KEGG" id="yps:YPTB1121"/>
<dbReference type="PATRIC" id="fig|273123.14.peg.1504"/>
<dbReference type="Proteomes" id="UP000001011">
    <property type="component" value="Chromosome"/>
</dbReference>
<dbReference type="GO" id="GO:0005829">
    <property type="term" value="C:cytosol"/>
    <property type="evidence" value="ECO:0007669"/>
    <property type="project" value="TreeGrafter"/>
</dbReference>
<dbReference type="GO" id="GO:0005524">
    <property type="term" value="F:ATP binding"/>
    <property type="evidence" value="ECO:0007669"/>
    <property type="project" value="UniProtKB-UniRule"/>
</dbReference>
<dbReference type="GO" id="GO:0004819">
    <property type="term" value="F:glutamine-tRNA ligase activity"/>
    <property type="evidence" value="ECO:0007669"/>
    <property type="project" value="UniProtKB-UniRule"/>
</dbReference>
<dbReference type="GO" id="GO:0006425">
    <property type="term" value="P:glutaminyl-tRNA aminoacylation"/>
    <property type="evidence" value="ECO:0007669"/>
    <property type="project" value="InterPro"/>
</dbReference>
<dbReference type="GO" id="GO:0006424">
    <property type="term" value="P:glutamyl-tRNA aminoacylation"/>
    <property type="evidence" value="ECO:0007669"/>
    <property type="project" value="UniProtKB-UniRule"/>
</dbReference>
<dbReference type="CDD" id="cd00807">
    <property type="entry name" value="GlnRS_core"/>
    <property type="match status" value="1"/>
</dbReference>
<dbReference type="FunFam" id="1.10.1160.10:FF:000001">
    <property type="entry name" value="Glutamine--tRNA ligase"/>
    <property type="match status" value="1"/>
</dbReference>
<dbReference type="FunFam" id="2.40.240.10:FF:000001">
    <property type="entry name" value="Glutamine--tRNA ligase"/>
    <property type="match status" value="1"/>
</dbReference>
<dbReference type="FunFam" id="2.40.240.10:FF:000003">
    <property type="entry name" value="Glutamine--tRNA ligase"/>
    <property type="match status" value="1"/>
</dbReference>
<dbReference type="FunFam" id="3.90.800.10:FF:000001">
    <property type="entry name" value="Glutamine--tRNA ligase"/>
    <property type="match status" value="1"/>
</dbReference>
<dbReference type="FunFam" id="3.40.50.620:FF:000037">
    <property type="entry name" value="Glutamine--tRNA ligase cytoplasmic"/>
    <property type="match status" value="1"/>
</dbReference>
<dbReference type="Gene3D" id="1.10.1160.10">
    <property type="entry name" value="Glutamyl-trna Synthetase, Domain 2"/>
    <property type="match status" value="1"/>
</dbReference>
<dbReference type="Gene3D" id="3.90.800.10">
    <property type="entry name" value="Glutamyl-tRNA Synthetase, Domain 3"/>
    <property type="match status" value="1"/>
</dbReference>
<dbReference type="Gene3D" id="3.40.50.620">
    <property type="entry name" value="HUPs"/>
    <property type="match status" value="1"/>
</dbReference>
<dbReference type="Gene3D" id="2.40.240.10">
    <property type="entry name" value="Ribosomal Protein L25, Chain P"/>
    <property type="match status" value="2"/>
</dbReference>
<dbReference type="HAMAP" id="MF_00126">
    <property type="entry name" value="Gln_tRNA_synth"/>
    <property type="match status" value="1"/>
</dbReference>
<dbReference type="InterPro" id="IPR001412">
    <property type="entry name" value="aa-tRNA-synth_I_CS"/>
</dbReference>
<dbReference type="InterPro" id="IPR004514">
    <property type="entry name" value="Gln-tRNA-synth"/>
</dbReference>
<dbReference type="InterPro" id="IPR050132">
    <property type="entry name" value="Gln/Glu-tRNA_Ligase"/>
</dbReference>
<dbReference type="InterPro" id="IPR022861">
    <property type="entry name" value="Gln_tRNA_ligase_bac"/>
</dbReference>
<dbReference type="InterPro" id="IPR000924">
    <property type="entry name" value="Glu/Gln-tRNA-synth"/>
</dbReference>
<dbReference type="InterPro" id="IPR020058">
    <property type="entry name" value="Glu/Gln-tRNA-synth_Ib_cat-dom"/>
</dbReference>
<dbReference type="InterPro" id="IPR020059">
    <property type="entry name" value="Glu/Gln-tRNA-synth_Ib_codon-bd"/>
</dbReference>
<dbReference type="InterPro" id="IPR020061">
    <property type="entry name" value="Glu_tRNA_lig_a-bdl"/>
</dbReference>
<dbReference type="InterPro" id="IPR020056">
    <property type="entry name" value="Rbsml_bL25/Gln-tRNA_synth_N"/>
</dbReference>
<dbReference type="InterPro" id="IPR011035">
    <property type="entry name" value="Ribosomal_bL25/Gln-tRNA_synth"/>
</dbReference>
<dbReference type="InterPro" id="IPR014729">
    <property type="entry name" value="Rossmann-like_a/b/a_fold"/>
</dbReference>
<dbReference type="InterPro" id="IPR049437">
    <property type="entry name" value="tRNA-synt_1c_C2"/>
</dbReference>
<dbReference type="NCBIfam" id="TIGR00440">
    <property type="entry name" value="glnS"/>
    <property type="match status" value="1"/>
</dbReference>
<dbReference type="NCBIfam" id="NF011291">
    <property type="entry name" value="PRK14703.1"/>
    <property type="match status" value="1"/>
</dbReference>
<dbReference type="PANTHER" id="PTHR43097:SF5">
    <property type="entry name" value="GLUTAMATE--TRNA LIGASE"/>
    <property type="match status" value="1"/>
</dbReference>
<dbReference type="PANTHER" id="PTHR43097">
    <property type="entry name" value="GLUTAMINE-TRNA LIGASE"/>
    <property type="match status" value="1"/>
</dbReference>
<dbReference type="Pfam" id="PF00749">
    <property type="entry name" value="tRNA-synt_1c"/>
    <property type="match status" value="1"/>
</dbReference>
<dbReference type="Pfam" id="PF03950">
    <property type="entry name" value="tRNA-synt_1c_C"/>
    <property type="match status" value="1"/>
</dbReference>
<dbReference type="Pfam" id="PF20974">
    <property type="entry name" value="tRNA-synt_1c_C2"/>
    <property type="match status" value="1"/>
</dbReference>
<dbReference type="PRINTS" id="PR00987">
    <property type="entry name" value="TRNASYNTHGLU"/>
</dbReference>
<dbReference type="SUPFAM" id="SSF52374">
    <property type="entry name" value="Nucleotidylyl transferase"/>
    <property type="match status" value="1"/>
</dbReference>
<dbReference type="SUPFAM" id="SSF50715">
    <property type="entry name" value="Ribosomal protein L25-like"/>
    <property type="match status" value="1"/>
</dbReference>
<dbReference type="PROSITE" id="PS00178">
    <property type="entry name" value="AA_TRNA_LIGASE_I"/>
    <property type="match status" value="1"/>
</dbReference>
<evidence type="ECO:0000255" key="1">
    <source>
        <dbReference type="HAMAP-Rule" id="MF_00126"/>
    </source>
</evidence>
<keyword id="KW-0030">Aminoacyl-tRNA synthetase</keyword>
<keyword id="KW-0067">ATP-binding</keyword>
<keyword id="KW-0963">Cytoplasm</keyword>
<keyword id="KW-0436">Ligase</keyword>
<keyword id="KW-0547">Nucleotide-binding</keyword>
<keyword id="KW-0648">Protein biosynthesis</keyword>
<reference key="1">
    <citation type="journal article" date="2004" name="Proc. Natl. Acad. Sci. U.S.A.">
        <title>Insights into the evolution of Yersinia pestis through whole-genome comparison with Yersinia pseudotuberculosis.</title>
        <authorList>
            <person name="Chain P.S.G."/>
            <person name="Carniel E."/>
            <person name="Larimer F.W."/>
            <person name="Lamerdin J."/>
            <person name="Stoutland P.O."/>
            <person name="Regala W.M."/>
            <person name="Georgescu A.M."/>
            <person name="Vergez L.M."/>
            <person name="Land M.L."/>
            <person name="Motin V.L."/>
            <person name="Brubaker R.R."/>
            <person name="Fowler J."/>
            <person name="Hinnebusch J."/>
            <person name="Marceau M."/>
            <person name="Medigue C."/>
            <person name="Simonet M."/>
            <person name="Chenal-Francisque V."/>
            <person name="Souza B."/>
            <person name="Dacheux D."/>
            <person name="Elliott J.M."/>
            <person name="Derbise A."/>
            <person name="Hauser L.J."/>
            <person name="Garcia E."/>
        </authorList>
    </citation>
    <scope>NUCLEOTIDE SEQUENCE [LARGE SCALE GENOMIC DNA]</scope>
    <source>
        <strain>IP32953</strain>
    </source>
</reference>
<sequence length="555" mass="63751">MSEAEARPSNFIRQIIDEDLASGKHTSVHTRFPPEPNGYLHIGHAKSICLNFGIAEDYQGQCNLRFDDTNPVKEDVEFVESIKRDVEWLGFTWSGDVRYSSDYFDQLYQYAVELINKGLAYVDELTPEQMREYRGTLTAPGKNSPYRDRSVEENLALFEKMRAGGFAEGTACLRAKIDMASPFIVMRDPVLYRIKFAEHHQSGNKWCIYPMYDFTHCISDALEGITHSLCTLEFQDNRRLYDWVLDNISIDCHPRQYEFSRLNLEYTIMSKRKLNQLVTEKVVEGWDDPRMPTISGLRRRGYTAASIREFCRRIGVTKQDNNVEMMSLESCIRDDLNEHAPRAMAVLDPIKVVIENRAAGEEWLTMPNHPNNPEMGSRQVPFDSEIYIDRADFREEANKQYKRLVLGKEVRLRNAYVIKAERVEKDAEGNVTTLYCSYDAETLNKDPADGRKVKGVIHWVSVAHALPAEIRLYDRLFNVPNPAAAEDFLSTINPESLVIRQGFVEPSLADAVSDKTYQFEREGYFCADSRYSRPGALVFNRTVGLRDTWAAKATQ</sequence>
<protein>
    <recommendedName>
        <fullName evidence="1">Glutamine--tRNA ligase</fullName>
        <ecNumber evidence="1">6.1.1.18</ecNumber>
    </recommendedName>
    <alternativeName>
        <fullName evidence="1">Glutaminyl-tRNA synthetase</fullName>
        <shortName evidence="1">GlnRS</shortName>
    </alternativeName>
</protein>
<organism>
    <name type="scientific">Yersinia pseudotuberculosis serotype I (strain IP32953)</name>
    <dbReference type="NCBI Taxonomy" id="273123"/>
    <lineage>
        <taxon>Bacteria</taxon>
        <taxon>Pseudomonadati</taxon>
        <taxon>Pseudomonadota</taxon>
        <taxon>Gammaproteobacteria</taxon>
        <taxon>Enterobacterales</taxon>
        <taxon>Yersiniaceae</taxon>
        <taxon>Yersinia</taxon>
    </lineage>
</organism>
<gene>
    <name evidence="1" type="primary">glnS</name>
    <name type="ordered locus">YPTB1121</name>
</gene>
<proteinExistence type="inferred from homology"/>